<organism>
    <name type="scientific">Streptococcus pneumoniae (strain CGSP14)</name>
    <dbReference type="NCBI Taxonomy" id="516950"/>
    <lineage>
        <taxon>Bacteria</taxon>
        <taxon>Bacillati</taxon>
        <taxon>Bacillota</taxon>
        <taxon>Bacilli</taxon>
        <taxon>Lactobacillales</taxon>
        <taxon>Streptococcaceae</taxon>
        <taxon>Streptococcus</taxon>
    </lineage>
</organism>
<gene>
    <name type="ordered locus">SPCG_1548</name>
</gene>
<feature type="chain" id="PRO_0000364958" description="Ferredoxin--NADP reductase">
    <location>
        <begin position="1"/>
        <end position="321"/>
    </location>
</feature>
<feature type="binding site" evidence="1">
    <location>
        <position position="34"/>
    </location>
    <ligand>
        <name>FAD</name>
        <dbReference type="ChEBI" id="CHEBI:57692"/>
    </ligand>
</feature>
<feature type="binding site" evidence="1">
    <location>
        <position position="42"/>
    </location>
    <ligand>
        <name>FAD</name>
        <dbReference type="ChEBI" id="CHEBI:57692"/>
    </ligand>
</feature>
<feature type="binding site" evidence="1">
    <location>
        <position position="47"/>
    </location>
    <ligand>
        <name>FAD</name>
        <dbReference type="ChEBI" id="CHEBI:57692"/>
    </ligand>
</feature>
<feature type="binding site" evidence="1">
    <location>
        <position position="87"/>
    </location>
    <ligand>
        <name>FAD</name>
        <dbReference type="ChEBI" id="CHEBI:57692"/>
    </ligand>
</feature>
<feature type="binding site" evidence="1">
    <location>
        <position position="119"/>
    </location>
    <ligand>
        <name>FAD</name>
        <dbReference type="ChEBI" id="CHEBI:57692"/>
    </ligand>
</feature>
<feature type="binding site" evidence="1">
    <location>
        <position position="278"/>
    </location>
    <ligand>
        <name>FAD</name>
        <dbReference type="ChEBI" id="CHEBI:57692"/>
    </ligand>
</feature>
<feature type="binding site" evidence="1">
    <location>
        <position position="319"/>
    </location>
    <ligand>
        <name>FAD</name>
        <dbReference type="ChEBI" id="CHEBI:57692"/>
    </ligand>
</feature>
<comment type="catalytic activity">
    <reaction evidence="1">
        <text>2 reduced [2Fe-2S]-[ferredoxin] + NADP(+) + H(+) = 2 oxidized [2Fe-2S]-[ferredoxin] + NADPH</text>
        <dbReference type="Rhea" id="RHEA:20125"/>
        <dbReference type="Rhea" id="RHEA-COMP:10000"/>
        <dbReference type="Rhea" id="RHEA-COMP:10001"/>
        <dbReference type="ChEBI" id="CHEBI:15378"/>
        <dbReference type="ChEBI" id="CHEBI:33737"/>
        <dbReference type="ChEBI" id="CHEBI:33738"/>
        <dbReference type="ChEBI" id="CHEBI:57783"/>
        <dbReference type="ChEBI" id="CHEBI:58349"/>
        <dbReference type="EC" id="1.18.1.2"/>
    </reaction>
</comment>
<comment type="cofactor">
    <cofactor evidence="1">
        <name>FAD</name>
        <dbReference type="ChEBI" id="CHEBI:57692"/>
    </cofactor>
    <text evidence="1">Binds 1 FAD per subunit.</text>
</comment>
<comment type="subunit">
    <text evidence="1">Homodimer.</text>
</comment>
<comment type="similarity">
    <text evidence="1">Belongs to the ferredoxin--NADP reductase type 2 family.</text>
</comment>
<dbReference type="EC" id="1.18.1.2" evidence="1"/>
<dbReference type="EMBL" id="CP001033">
    <property type="protein sequence ID" value="ACB90800.1"/>
    <property type="molecule type" value="Genomic_DNA"/>
</dbReference>
<dbReference type="RefSeq" id="WP_000081011.1">
    <property type="nucleotide sequence ID" value="NC_010582.1"/>
</dbReference>
<dbReference type="SMR" id="B2IR81"/>
<dbReference type="KEGG" id="spw:SPCG_1548"/>
<dbReference type="HOGENOM" id="CLU_031864_5_5_9"/>
<dbReference type="GO" id="GO:0004324">
    <property type="term" value="F:ferredoxin-NADP+ reductase activity"/>
    <property type="evidence" value="ECO:0007669"/>
    <property type="project" value="UniProtKB-UniRule"/>
</dbReference>
<dbReference type="GO" id="GO:0050660">
    <property type="term" value="F:flavin adenine dinucleotide binding"/>
    <property type="evidence" value="ECO:0007669"/>
    <property type="project" value="UniProtKB-UniRule"/>
</dbReference>
<dbReference type="GO" id="GO:0050661">
    <property type="term" value="F:NADP binding"/>
    <property type="evidence" value="ECO:0007669"/>
    <property type="project" value="UniProtKB-UniRule"/>
</dbReference>
<dbReference type="Gene3D" id="3.50.50.60">
    <property type="entry name" value="FAD/NAD(P)-binding domain"/>
    <property type="match status" value="2"/>
</dbReference>
<dbReference type="HAMAP" id="MF_01685">
    <property type="entry name" value="FENR2"/>
    <property type="match status" value="1"/>
</dbReference>
<dbReference type="InterPro" id="IPR036188">
    <property type="entry name" value="FAD/NAD-bd_sf"/>
</dbReference>
<dbReference type="InterPro" id="IPR023753">
    <property type="entry name" value="FAD/NAD-binding_dom"/>
</dbReference>
<dbReference type="InterPro" id="IPR022890">
    <property type="entry name" value="Fd--NADP_Rdtase_type_2"/>
</dbReference>
<dbReference type="InterPro" id="IPR050097">
    <property type="entry name" value="Ferredoxin-NADP_redctase_2"/>
</dbReference>
<dbReference type="PANTHER" id="PTHR48105">
    <property type="entry name" value="THIOREDOXIN REDUCTASE 1-RELATED-RELATED"/>
    <property type="match status" value="1"/>
</dbReference>
<dbReference type="Pfam" id="PF07992">
    <property type="entry name" value="Pyr_redox_2"/>
    <property type="match status" value="1"/>
</dbReference>
<dbReference type="PRINTS" id="PR00368">
    <property type="entry name" value="FADPNR"/>
</dbReference>
<dbReference type="PRINTS" id="PR00469">
    <property type="entry name" value="PNDRDTASEII"/>
</dbReference>
<dbReference type="SUPFAM" id="SSF51905">
    <property type="entry name" value="FAD/NAD(P)-binding domain"/>
    <property type="match status" value="1"/>
</dbReference>
<protein>
    <recommendedName>
        <fullName evidence="1">Ferredoxin--NADP reductase</fullName>
        <shortName evidence="1">FNR</shortName>
        <shortName evidence="1">Fd-NADP(+) reductase</shortName>
        <ecNumber evidence="1">1.18.1.2</ecNumber>
    </recommendedName>
</protein>
<accession>B2IR81</accession>
<name>FENR_STRPS</name>
<proteinExistence type="inferred from homology"/>
<evidence type="ECO:0000255" key="1">
    <source>
        <dbReference type="HAMAP-Rule" id="MF_01685"/>
    </source>
</evidence>
<reference key="1">
    <citation type="journal article" date="2009" name="BMC Genomics">
        <title>Genome evolution driven by host adaptations results in a more virulent and antimicrobial-resistant Streptococcus pneumoniae serotype 14.</title>
        <authorList>
            <person name="Ding F."/>
            <person name="Tang P."/>
            <person name="Hsu M.-H."/>
            <person name="Cui P."/>
            <person name="Hu S."/>
            <person name="Yu J."/>
            <person name="Chiu C.-H."/>
        </authorList>
    </citation>
    <scope>NUCLEOTIDE SEQUENCE [LARGE SCALE GENOMIC DNA]</scope>
    <source>
        <strain>CGSP14</strain>
    </source>
</reference>
<sequence length="321" mass="35141">MSQLYDITIVGGGPVGLFAAFYAHLRQAKVQIIDSLPQLGGQPAILYPEKEILDVPGFPNLTGEELTNRLIEQLNGFDTPIHLNETVLEIDKQEEFAITTSKGSHLTKTVIIAMGGGAFKPRPLELEGVEGYENIHYHVSNIQQYAGKKVTILGGGDSAVDWALAFEKIAPTTLVHRRDNFRALEHSVQALQESSVTIKTPFAPSQLLGNGKTLDKLEITKVKSDETETIDLDHLFVNYGFKSSVGNLKNWGLDLNRHKIIVNSKQESSQAGIYAIGDCCYYDGKIDLIATGLGEAPTAVNNAINYIDPEQKVQPKHSTSL</sequence>
<keyword id="KW-0274">FAD</keyword>
<keyword id="KW-0285">Flavoprotein</keyword>
<keyword id="KW-0521">NADP</keyword>
<keyword id="KW-0560">Oxidoreductase</keyword>